<dbReference type="EMBL" id="AF288358">
    <property type="protein sequence ID" value="AAK70925.1"/>
    <property type="molecule type" value="Genomic_DNA"/>
</dbReference>
<dbReference type="RefSeq" id="NP_001157489.1">
    <property type="nucleotide sequence ID" value="NM_001164017.1"/>
</dbReference>
<dbReference type="RefSeq" id="XP_023481688.1">
    <property type="nucleotide sequence ID" value="XM_023625920.2"/>
</dbReference>
<dbReference type="RefSeq" id="XP_070102952.1">
    <property type="nucleotide sequence ID" value="XM_070246851.1"/>
</dbReference>
<dbReference type="RefSeq" id="XP_070102953.1">
    <property type="nucleotide sequence ID" value="XM_070246852.1"/>
</dbReference>
<dbReference type="RefSeq" id="XP_070102954.1">
    <property type="nucleotide sequence ID" value="XM_070246853.1"/>
</dbReference>
<dbReference type="RefSeq" id="XP_070102955.1">
    <property type="nucleotide sequence ID" value="XM_070246854.1"/>
</dbReference>
<dbReference type="RefSeq" id="XP_070102956.1">
    <property type="nucleotide sequence ID" value="XM_070246855.1"/>
</dbReference>
<dbReference type="FunCoup" id="Q95MP2">
    <property type="interactions" value="37"/>
</dbReference>
<dbReference type="STRING" id="9796.ENSECAP00000003317"/>
<dbReference type="GlyCosmos" id="Q95MP2">
    <property type="glycosylation" value="2 sites, No reported glycans"/>
</dbReference>
<dbReference type="PaxDb" id="9796-ENSECAP00000003317"/>
<dbReference type="Ensembl" id="ENSECAT00000112645.1">
    <property type="protein sequence ID" value="ENSECAP00000059028.1"/>
    <property type="gene ID" value="ENSECAG00000004241.3"/>
</dbReference>
<dbReference type="GeneID" id="100054335"/>
<dbReference type="KEGG" id="ecb:100054335"/>
<dbReference type="CTD" id="434"/>
<dbReference type="VGNC" id="VGNC:15585">
    <property type="gene designation" value="ASIP"/>
</dbReference>
<dbReference type="GeneTree" id="ENSGT00940000154258"/>
<dbReference type="HOGENOM" id="CLU_138633_0_0_1"/>
<dbReference type="InParanoid" id="Q95MP2"/>
<dbReference type="OMA" id="CHCRFFR"/>
<dbReference type="OrthoDB" id="8717782at2759"/>
<dbReference type="TreeFam" id="TF330729"/>
<dbReference type="Proteomes" id="UP000002281">
    <property type="component" value="Chromosome 22"/>
</dbReference>
<dbReference type="Bgee" id="ENSECAG00000004241">
    <property type="expression patterns" value="Expressed in liver and 12 other cell types or tissues"/>
</dbReference>
<dbReference type="GO" id="GO:0005615">
    <property type="term" value="C:extracellular space"/>
    <property type="evidence" value="ECO:0000250"/>
    <property type="project" value="UniProtKB"/>
</dbReference>
<dbReference type="GO" id="GO:0031779">
    <property type="term" value="F:melanocortin receptor binding"/>
    <property type="evidence" value="ECO:0000318"/>
    <property type="project" value="GO_Central"/>
</dbReference>
<dbReference type="GO" id="GO:0005184">
    <property type="term" value="F:neuropeptide hormone activity"/>
    <property type="evidence" value="ECO:0000318"/>
    <property type="project" value="GO_Central"/>
</dbReference>
<dbReference type="GO" id="GO:0009755">
    <property type="term" value="P:hormone-mediated signaling pathway"/>
    <property type="evidence" value="ECO:0007669"/>
    <property type="project" value="InterPro"/>
</dbReference>
<dbReference type="GO" id="GO:0042438">
    <property type="term" value="P:melanin biosynthetic process"/>
    <property type="evidence" value="ECO:0000250"/>
    <property type="project" value="UniProtKB"/>
</dbReference>
<dbReference type="GO" id="GO:0032438">
    <property type="term" value="P:melanosome organization"/>
    <property type="evidence" value="ECO:0000318"/>
    <property type="project" value="GO_Central"/>
</dbReference>
<dbReference type="Gene3D" id="4.10.760.10">
    <property type="entry name" value="Agouti domain"/>
    <property type="match status" value="1"/>
</dbReference>
<dbReference type="InterPro" id="IPR007733">
    <property type="entry name" value="Agouti"/>
</dbReference>
<dbReference type="InterPro" id="IPR027300">
    <property type="entry name" value="Agouti_dom"/>
</dbReference>
<dbReference type="InterPro" id="IPR036836">
    <property type="entry name" value="Agouti_dom_sf"/>
</dbReference>
<dbReference type="PANTHER" id="PTHR16551">
    <property type="entry name" value="AGOUTI RELATED"/>
    <property type="match status" value="1"/>
</dbReference>
<dbReference type="PANTHER" id="PTHR16551:SF1">
    <property type="entry name" value="AGOUTI-SIGNALING PROTEIN"/>
    <property type="match status" value="1"/>
</dbReference>
<dbReference type="Pfam" id="PF05039">
    <property type="entry name" value="Agouti"/>
    <property type="match status" value="1"/>
</dbReference>
<dbReference type="SMART" id="SM00792">
    <property type="entry name" value="Agouti"/>
    <property type="match status" value="1"/>
</dbReference>
<dbReference type="SUPFAM" id="SSF57055">
    <property type="entry name" value="Agouti-related protein"/>
    <property type="match status" value="1"/>
</dbReference>
<dbReference type="PROSITE" id="PS60024">
    <property type="entry name" value="AGOUTI_1"/>
    <property type="match status" value="1"/>
</dbReference>
<dbReference type="PROSITE" id="PS51150">
    <property type="entry name" value="AGOUTI_2"/>
    <property type="match status" value="1"/>
</dbReference>
<keyword id="KW-1015">Disulfide bond</keyword>
<keyword id="KW-0325">Glycoprotein</keyword>
<keyword id="KW-0960">Knottin</keyword>
<keyword id="KW-1185">Reference proteome</keyword>
<keyword id="KW-0964">Secreted</keyword>
<keyword id="KW-0732">Signal</keyword>
<organism>
    <name type="scientific">Equus caballus</name>
    <name type="common">Horse</name>
    <dbReference type="NCBI Taxonomy" id="9796"/>
    <lineage>
        <taxon>Eukaryota</taxon>
        <taxon>Metazoa</taxon>
        <taxon>Chordata</taxon>
        <taxon>Craniata</taxon>
        <taxon>Vertebrata</taxon>
        <taxon>Euteleostomi</taxon>
        <taxon>Mammalia</taxon>
        <taxon>Eutheria</taxon>
        <taxon>Laurasiatheria</taxon>
        <taxon>Perissodactyla</taxon>
        <taxon>Equidae</taxon>
        <taxon>Equus</taxon>
    </lineage>
</organism>
<proteinExistence type="inferred from homology"/>
<name>ASIP_HORSE</name>
<reference key="1">
    <citation type="journal article" date="2001" name="Mamm. Genome">
        <title>Mutations in the agouti (ASIP), the extension (MC1R), and the brown (TYRP1) loci and their association to coat color phenotypes in horses (Equus caballus).</title>
        <authorList>
            <person name="Rieder S."/>
            <person name="Taourit S."/>
            <person name="Mariat D."/>
            <person name="Langlois B."/>
            <person name="Guerin G."/>
        </authorList>
    </citation>
    <scope>NUCLEOTIDE SEQUENCE [GENOMIC DNA]</scope>
</reference>
<accession>Q95MP2</accession>
<sequence length="133" mass="14780">MDVIHLFLATLLVSLCFLTAYSHLSPEEKPKDDRSLRNNSSMNLLDSPSVSIMALNKKSKKISRKEAEKKKRSSKKKASMTKVARPRLLQPAPCVATRDSCKPPAPACCDPCASCQCRFFRSACSCRVLTRTC</sequence>
<protein>
    <recommendedName>
        <fullName>Agouti-signaling protein</fullName>
        <shortName>ASP</shortName>
    </recommendedName>
    <alternativeName>
        <fullName>Agouti switch protein</fullName>
    </alternativeName>
</protein>
<evidence type="ECO:0000250" key="1"/>
<evidence type="ECO:0000250" key="2">
    <source>
        <dbReference type="UniProtKB" id="P42127"/>
    </source>
</evidence>
<evidence type="ECO:0000250" key="3">
    <source>
        <dbReference type="UniProtKB" id="Q03288"/>
    </source>
</evidence>
<evidence type="ECO:0000255" key="4"/>
<evidence type="ECO:0000255" key="5">
    <source>
        <dbReference type="PROSITE-ProRule" id="PRU00494"/>
    </source>
</evidence>
<evidence type="ECO:0000256" key="6">
    <source>
        <dbReference type="SAM" id="MobiDB-lite"/>
    </source>
</evidence>
<comment type="function">
    <text evidence="3">Involved in the regulation of melanogenesis. The binding of ASP to MC1R precludes alpha-MSH initiated signaling and thus blocks production of cAMP, leading to a down-regulation of eumelanogenesis (brown/black pigment) and thus increasing synthesis of pheomelanin (yellow/red pigment) (By similarity).</text>
</comment>
<comment type="subcellular location">
    <subcellularLocation>
        <location evidence="2">Secreted</location>
    </subcellularLocation>
</comment>
<comment type="domain">
    <text evidence="1">The presence of a 'disulfide through disulfide knot' structurally defines this protein as a knottin.</text>
</comment>
<feature type="signal peptide" evidence="4">
    <location>
        <begin position="1"/>
        <end position="22"/>
    </location>
</feature>
<feature type="chain" id="PRO_0000001027" description="Agouti-signaling protein">
    <location>
        <begin position="23"/>
        <end position="133"/>
    </location>
</feature>
<feature type="domain" description="Agouti" evidence="5">
    <location>
        <begin position="94"/>
        <end position="133"/>
    </location>
</feature>
<feature type="region of interest" description="Disordered" evidence="6">
    <location>
        <begin position="26"/>
        <end position="83"/>
    </location>
</feature>
<feature type="compositionally biased region" description="Basic and acidic residues" evidence="6">
    <location>
        <begin position="26"/>
        <end position="36"/>
    </location>
</feature>
<feature type="compositionally biased region" description="Polar residues" evidence="6">
    <location>
        <begin position="37"/>
        <end position="50"/>
    </location>
</feature>
<feature type="compositionally biased region" description="Basic residues" evidence="6">
    <location>
        <begin position="70"/>
        <end position="79"/>
    </location>
</feature>
<feature type="glycosylation site" description="N-linked (GlcNAc...) asparagine" evidence="4">
    <location>
        <position position="38"/>
    </location>
</feature>
<feature type="glycosylation site" description="N-linked (GlcNAc...) asparagine" evidence="4">
    <location>
        <position position="39"/>
    </location>
</feature>
<feature type="disulfide bond" evidence="5">
    <location>
        <begin position="94"/>
        <end position="109"/>
    </location>
</feature>
<feature type="disulfide bond" evidence="5">
    <location>
        <begin position="101"/>
        <end position="115"/>
    </location>
</feature>
<feature type="disulfide bond" evidence="5">
    <location>
        <begin position="108"/>
        <end position="126"/>
    </location>
</feature>
<feature type="disulfide bond" evidence="5">
    <location>
        <begin position="112"/>
        <end position="133"/>
    </location>
</feature>
<feature type="disulfide bond" evidence="5">
    <location>
        <begin position="117"/>
        <end position="124"/>
    </location>
</feature>
<gene>
    <name type="primary">ASIP</name>
</gene>